<reference key="1">
    <citation type="journal article" date="2009" name="PLoS ONE">
        <title>Genome analysis of the anaerobic thermohalophilic bacterium Halothermothrix orenii.</title>
        <authorList>
            <person name="Mavromatis K."/>
            <person name="Ivanova N."/>
            <person name="Anderson I."/>
            <person name="Lykidis A."/>
            <person name="Hooper S.D."/>
            <person name="Sun H."/>
            <person name="Kunin V."/>
            <person name="Lapidus A."/>
            <person name="Hugenholtz P."/>
            <person name="Patel B."/>
            <person name="Kyrpides N.C."/>
        </authorList>
    </citation>
    <scope>NUCLEOTIDE SEQUENCE [LARGE SCALE GENOMIC DNA]</scope>
    <source>
        <strain>H 168 / OCM 544 / DSM 9562</strain>
    </source>
</reference>
<feature type="chain" id="PRO_1000200889" description="Peptidase T">
    <location>
        <begin position="1"/>
        <end position="408"/>
    </location>
</feature>
<feature type="active site" evidence="1">
    <location>
        <position position="80"/>
    </location>
</feature>
<feature type="active site" description="Proton acceptor" evidence="1">
    <location>
        <position position="175"/>
    </location>
</feature>
<feature type="binding site" evidence="1">
    <location>
        <position position="78"/>
    </location>
    <ligand>
        <name>Zn(2+)</name>
        <dbReference type="ChEBI" id="CHEBI:29105"/>
        <label>1</label>
    </ligand>
</feature>
<feature type="binding site" evidence="1">
    <location>
        <position position="141"/>
    </location>
    <ligand>
        <name>Zn(2+)</name>
        <dbReference type="ChEBI" id="CHEBI:29105"/>
        <label>1</label>
    </ligand>
</feature>
<feature type="binding site" evidence="1">
    <location>
        <position position="141"/>
    </location>
    <ligand>
        <name>Zn(2+)</name>
        <dbReference type="ChEBI" id="CHEBI:29105"/>
        <label>2</label>
    </ligand>
</feature>
<feature type="binding site" evidence="1">
    <location>
        <position position="176"/>
    </location>
    <ligand>
        <name>Zn(2+)</name>
        <dbReference type="ChEBI" id="CHEBI:29105"/>
        <label>2</label>
    </ligand>
</feature>
<feature type="binding site" evidence="1">
    <location>
        <position position="198"/>
    </location>
    <ligand>
        <name>Zn(2+)</name>
        <dbReference type="ChEBI" id="CHEBI:29105"/>
        <label>1</label>
    </ligand>
</feature>
<feature type="binding site" evidence="1">
    <location>
        <position position="380"/>
    </location>
    <ligand>
        <name>Zn(2+)</name>
        <dbReference type="ChEBI" id="CHEBI:29105"/>
        <label>2</label>
    </ligand>
</feature>
<evidence type="ECO:0000255" key="1">
    <source>
        <dbReference type="HAMAP-Rule" id="MF_00550"/>
    </source>
</evidence>
<organism>
    <name type="scientific">Halothermothrix orenii (strain H 168 / OCM 544 / DSM 9562)</name>
    <dbReference type="NCBI Taxonomy" id="373903"/>
    <lineage>
        <taxon>Bacteria</taxon>
        <taxon>Bacillati</taxon>
        <taxon>Bacillota</taxon>
        <taxon>Clostridia</taxon>
        <taxon>Halanaerobiales</taxon>
        <taxon>Halothermotrichaceae</taxon>
        <taxon>Halothermothrix</taxon>
    </lineage>
</organism>
<dbReference type="EC" id="3.4.11.4" evidence="1"/>
<dbReference type="EMBL" id="CP001098">
    <property type="protein sequence ID" value="ACL69719.1"/>
    <property type="molecule type" value="Genomic_DNA"/>
</dbReference>
<dbReference type="RefSeq" id="WP_012635905.1">
    <property type="nucleotide sequence ID" value="NC_011899.1"/>
</dbReference>
<dbReference type="SMR" id="B8CWQ0"/>
<dbReference type="STRING" id="373903.Hore_09630"/>
<dbReference type="MEROPS" id="M20.003"/>
<dbReference type="KEGG" id="hor:Hore_09630"/>
<dbReference type="eggNOG" id="COG2195">
    <property type="taxonomic scope" value="Bacteria"/>
</dbReference>
<dbReference type="HOGENOM" id="CLU_053676_0_0_9"/>
<dbReference type="OrthoDB" id="9804934at2"/>
<dbReference type="Proteomes" id="UP000000719">
    <property type="component" value="Chromosome"/>
</dbReference>
<dbReference type="GO" id="GO:0005829">
    <property type="term" value="C:cytosol"/>
    <property type="evidence" value="ECO:0007669"/>
    <property type="project" value="TreeGrafter"/>
</dbReference>
<dbReference type="GO" id="GO:0008237">
    <property type="term" value="F:metallopeptidase activity"/>
    <property type="evidence" value="ECO:0007669"/>
    <property type="project" value="UniProtKB-KW"/>
</dbReference>
<dbReference type="GO" id="GO:0045148">
    <property type="term" value="F:tripeptide aminopeptidase activity"/>
    <property type="evidence" value="ECO:0007669"/>
    <property type="project" value="UniProtKB-UniRule"/>
</dbReference>
<dbReference type="GO" id="GO:0008270">
    <property type="term" value="F:zinc ion binding"/>
    <property type="evidence" value="ECO:0007669"/>
    <property type="project" value="UniProtKB-UniRule"/>
</dbReference>
<dbReference type="GO" id="GO:0043171">
    <property type="term" value="P:peptide catabolic process"/>
    <property type="evidence" value="ECO:0007669"/>
    <property type="project" value="UniProtKB-UniRule"/>
</dbReference>
<dbReference type="GO" id="GO:0006508">
    <property type="term" value="P:proteolysis"/>
    <property type="evidence" value="ECO:0007669"/>
    <property type="project" value="UniProtKB-UniRule"/>
</dbReference>
<dbReference type="CDD" id="cd03892">
    <property type="entry name" value="M20_peptT"/>
    <property type="match status" value="1"/>
</dbReference>
<dbReference type="FunFam" id="3.30.70.360:FF:000002">
    <property type="entry name" value="Peptidase T"/>
    <property type="match status" value="1"/>
</dbReference>
<dbReference type="Gene3D" id="3.30.70.360">
    <property type="match status" value="1"/>
</dbReference>
<dbReference type="Gene3D" id="3.40.630.10">
    <property type="entry name" value="Zn peptidases"/>
    <property type="match status" value="1"/>
</dbReference>
<dbReference type="HAMAP" id="MF_00550">
    <property type="entry name" value="Aminopeptidase_M20"/>
    <property type="match status" value="1"/>
</dbReference>
<dbReference type="InterPro" id="IPR001261">
    <property type="entry name" value="ArgE/DapE_CS"/>
</dbReference>
<dbReference type="InterPro" id="IPR036264">
    <property type="entry name" value="Bact_exopeptidase_dim_dom"/>
</dbReference>
<dbReference type="InterPro" id="IPR002933">
    <property type="entry name" value="Peptidase_M20"/>
</dbReference>
<dbReference type="InterPro" id="IPR011650">
    <property type="entry name" value="Peptidase_M20_dimer"/>
</dbReference>
<dbReference type="InterPro" id="IPR010161">
    <property type="entry name" value="Peptidase_M20B"/>
</dbReference>
<dbReference type="NCBIfam" id="TIGR01882">
    <property type="entry name" value="peptidase-T"/>
    <property type="match status" value="1"/>
</dbReference>
<dbReference type="NCBIfam" id="NF003976">
    <property type="entry name" value="PRK05469.1"/>
    <property type="match status" value="1"/>
</dbReference>
<dbReference type="NCBIfam" id="NF009920">
    <property type="entry name" value="PRK13381.1"/>
    <property type="match status" value="1"/>
</dbReference>
<dbReference type="PANTHER" id="PTHR42994">
    <property type="entry name" value="PEPTIDASE T"/>
    <property type="match status" value="1"/>
</dbReference>
<dbReference type="PANTHER" id="PTHR42994:SF1">
    <property type="entry name" value="PEPTIDASE T"/>
    <property type="match status" value="1"/>
</dbReference>
<dbReference type="Pfam" id="PF07687">
    <property type="entry name" value="M20_dimer"/>
    <property type="match status" value="1"/>
</dbReference>
<dbReference type="Pfam" id="PF01546">
    <property type="entry name" value="Peptidase_M20"/>
    <property type="match status" value="1"/>
</dbReference>
<dbReference type="PIRSF" id="PIRSF037215">
    <property type="entry name" value="Peptidase_M20B"/>
    <property type="match status" value="1"/>
</dbReference>
<dbReference type="SUPFAM" id="SSF55031">
    <property type="entry name" value="Bacterial exopeptidase dimerisation domain"/>
    <property type="match status" value="1"/>
</dbReference>
<dbReference type="SUPFAM" id="SSF53187">
    <property type="entry name" value="Zn-dependent exopeptidases"/>
    <property type="match status" value="1"/>
</dbReference>
<dbReference type="PROSITE" id="PS00758">
    <property type="entry name" value="ARGE_DAPE_CPG2_1"/>
    <property type="match status" value="1"/>
</dbReference>
<dbReference type="PROSITE" id="PS00759">
    <property type="entry name" value="ARGE_DAPE_CPG2_2"/>
    <property type="match status" value="1"/>
</dbReference>
<protein>
    <recommendedName>
        <fullName evidence="1">Peptidase T</fullName>
        <ecNumber evidence="1">3.4.11.4</ecNumber>
    </recommendedName>
    <alternativeName>
        <fullName evidence="1">Aminotripeptidase</fullName>
        <shortName evidence="1">Tripeptidase</shortName>
    </alternativeName>
    <alternativeName>
        <fullName evidence="1">Tripeptide aminopeptidase</fullName>
    </alternativeName>
</protein>
<proteinExistence type="inferred from homology"/>
<keyword id="KW-0031">Aminopeptidase</keyword>
<keyword id="KW-0963">Cytoplasm</keyword>
<keyword id="KW-0378">Hydrolase</keyword>
<keyword id="KW-0479">Metal-binding</keyword>
<keyword id="KW-0482">Metalloprotease</keyword>
<keyword id="KW-0645">Protease</keyword>
<keyword id="KW-1185">Reference proteome</keyword>
<keyword id="KW-0862">Zinc</keyword>
<accession>B8CWQ0</accession>
<sequence>MAKVVDRFISYVKYSTTSKEGSETFPSTEGQLKFARLLVDELKELGLNNVHLDEYGYVMATVPSNVDHKVPTIGFIAHMDTSPDMSGTNVKPQIVENYNGKDIVLNKSKNIILSPDNFPELKKYTGKTLITTDGTTLLGADDKAGIAEIITAVEHLMNNPEYPHGEIKIAFTPDEEIGQGADKFRVDKFGADFAYTVDGGPIGELEYENFNAARAKITVNGVNVHPGTAKNKMKNSLLIANELINMLPPAEIPAHTEGYEGFFHLMSVTGSVEQTRLDFIIRDFYKNKFEERKNLMVKIADYLNVKYGENTITLNLKDQYYNMKEKIKEHIHIVYTARRAMEEVGVTPRVNPIRGGTDGARLSYMGLPTPNLFTGGHNFHGRYEYIPVFAMEKAVDVILKIIELYATK</sequence>
<comment type="function">
    <text evidence="1">Cleaves the N-terminal amino acid of tripeptides.</text>
</comment>
<comment type="catalytic activity">
    <reaction evidence="1">
        <text>Release of the N-terminal residue from a tripeptide.</text>
        <dbReference type="EC" id="3.4.11.4"/>
    </reaction>
</comment>
<comment type="cofactor">
    <cofactor evidence="1">
        <name>Zn(2+)</name>
        <dbReference type="ChEBI" id="CHEBI:29105"/>
    </cofactor>
    <text evidence="1">Binds 2 Zn(2+) ions per subunit.</text>
</comment>
<comment type="subcellular location">
    <subcellularLocation>
        <location evidence="1">Cytoplasm</location>
    </subcellularLocation>
</comment>
<comment type="similarity">
    <text evidence="1">Belongs to the peptidase M20B family.</text>
</comment>
<gene>
    <name evidence="1" type="primary">pepT</name>
    <name type="ordered locus">Hore_09630</name>
</gene>
<name>PEPT_HALOH</name>